<protein>
    <recommendedName>
        <fullName evidence="5 6">Adenylosuccinate lyase</fullName>
        <shortName evidence="5 6">ASL</shortName>
        <ecNumber evidence="2">4.3.2.2</ecNumber>
    </recommendedName>
    <alternativeName>
        <fullName>Adenylosuccinase</fullName>
        <shortName>ASase</shortName>
    </alternativeName>
</protein>
<accession>P0AB89</accession>
<accession>P25739</accession>
<keyword id="KW-0002">3D-structure</keyword>
<keyword id="KW-0007">Acetylation</keyword>
<keyword id="KW-0903">Direct protein sequencing</keyword>
<keyword id="KW-0456">Lyase</keyword>
<keyword id="KW-0658">Purine biosynthesis</keyword>
<keyword id="KW-1185">Reference proteome</keyword>
<reference key="1">
    <citation type="journal article" date="1992" name="J. Bacteriol.">
        <title>Escherichia coli purB gene: cloning, nucleotide sequence, and regulation by purR.</title>
        <authorList>
            <person name="He B."/>
            <person name="Smith J.M."/>
            <person name="Zalkin H."/>
        </authorList>
    </citation>
    <scope>NUCLEOTIDE SEQUENCE [GENOMIC DNA]</scope>
    <scope>PROTEIN SEQUENCE OF 1-6</scope>
    <scope>INDUCTION</scope>
    <source>
        <strain>K12</strain>
    </source>
</reference>
<reference key="2">
    <citation type="submission" date="1991-05" db="EMBL/GenBank/DDBJ databases">
        <authorList>
            <person name="Green S.M."/>
            <person name="Drabble W.T."/>
        </authorList>
    </citation>
    <scope>NUCLEOTIDE SEQUENCE [GENOMIC DNA]</scope>
    <source>
        <strain>K12</strain>
    </source>
</reference>
<reference key="3">
    <citation type="journal article" date="1996" name="DNA Res.">
        <title>A 718-kb DNA sequence of the Escherichia coli K-12 genome corresponding to the 12.7-28.0 min region on the linkage map.</title>
        <authorList>
            <person name="Oshima T."/>
            <person name="Aiba H."/>
            <person name="Baba T."/>
            <person name="Fujita K."/>
            <person name="Hayashi K."/>
            <person name="Honjo A."/>
            <person name="Ikemoto K."/>
            <person name="Inada T."/>
            <person name="Itoh T."/>
            <person name="Kajihara M."/>
            <person name="Kanai K."/>
            <person name="Kashimoto K."/>
            <person name="Kimura S."/>
            <person name="Kitagawa M."/>
            <person name="Makino K."/>
            <person name="Masuda S."/>
            <person name="Miki T."/>
            <person name="Mizobuchi K."/>
            <person name="Mori H."/>
            <person name="Motomura K."/>
            <person name="Nakamura Y."/>
            <person name="Nashimoto H."/>
            <person name="Nishio Y."/>
            <person name="Saito N."/>
            <person name="Sampei G."/>
            <person name="Seki Y."/>
            <person name="Tagami H."/>
            <person name="Takemoto K."/>
            <person name="Wada C."/>
            <person name="Yamamoto Y."/>
            <person name="Yano M."/>
            <person name="Horiuchi T."/>
        </authorList>
    </citation>
    <scope>NUCLEOTIDE SEQUENCE [LARGE SCALE GENOMIC DNA]</scope>
    <source>
        <strain>K12 / W3110 / ATCC 27325 / DSM 5911</strain>
    </source>
</reference>
<reference key="4">
    <citation type="journal article" date="1997" name="Science">
        <title>The complete genome sequence of Escherichia coli K-12.</title>
        <authorList>
            <person name="Blattner F.R."/>
            <person name="Plunkett G. III"/>
            <person name="Bloch C.A."/>
            <person name="Perna N.T."/>
            <person name="Burland V."/>
            <person name="Riley M."/>
            <person name="Collado-Vides J."/>
            <person name="Glasner J.D."/>
            <person name="Rode C.K."/>
            <person name="Mayhew G.F."/>
            <person name="Gregor J."/>
            <person name="Davis N.W."/>
            <person name="Kirkpatrick H.A."/>
            <person name="Goeden M.A."/>
            <person name="Rose D.J."/>
            <person name="Mau B."/>
            <person name="Shao Y."/>
        </authorList>
    </citation>
    <scope>NUCLEOTIDE SEQUENCE [LARGE SCALE GENOMIC DNA]</scope>
    <source>
        <strain>K12 / MG1655 / ATCC 47076</strain>
    </source>
</reference>
<reference key="5">
    <citation type="journal article" date="2006" name="Mol. Syst. Biol.">
        <title>Highly accurate genome sequences of Escherichia coli K-12 strains MG1655 and W3110.</title>
        <authorList>
            <person name="Hayashi K."/>
            <person name="Morooka N."/>
            <person name="Yamamoto Y."/>
            <person name="Fujita K."/>
            <person name="Isono K."/>
            <person name="Choi S."/>
            <person name="Ohtsubo E."/>
            <person name="Baba T."/>
            <person name="Wanner B.L."/>
            <person name="Mori H."/>
            <person name="Horiuchi T."/>
        </authorList>
    </citation>
    <scope>NUCLEOTIDE SEQUENCE [LARGE SCALE GENOMIC DNA]</scope>
    <source>
        <strain>K12 / W3110 / ATCC 27325 / DSM 5911</strain>
    </source>
</reference>
<reference key="6">
    <citation type="journal article" date="1992" name="J. Bacteriol.">
        <title>Molecular analysis of the Escherichia coli phoP-phoQ operon.</title>
        <authorList>
            <person name="Kasahara M."/>
            <person name="Nakata A."/>
            <person name="Shinagawa H."/>
        </authorList>
    </citation>
    <scope>NUCLEOTIDE SEQUENCE [GENOMIC DNA] OF 164-456</scope>
    <source>
        <strain>K12</strain>
    </source>
</reference>
<reference key="7">
    <citation type="journal article" date="2009" name="Mol. Cell. Proteomics">
        <title>Lysine acetylation is a highly abundant and evolutionarily conserved modification in Escherichia coli.</title>
        <authorList>
            <person name="Zhang J."/>
            <person name="Sprung R."/>
            <person name="Pei J."/>
            <person name="Tan X."/>
            <person name="Kim S."/>
            <person name="Zhu H."/>
            <person name="Liu C.F."/>
            <person name="Grishin N.V."/>
            <person name="Zhao Y."/>
        </authorList>
    </citation>
    <scope>ACETYLATION [LARGE SCALE ANALYSIS] AT LYS-94 AND LYS-366</scope>
    <scope>IDENTIFICATION BY MASS SPECTROMETRY</scope>
    <source>
        <strain>K12 / JW1106</strain>
        <strain>K12 / MG1655 / ATCC 47076</strain>
    </source>
</reference>
<reference key="8">
    <citation type="journal article" date="2021" name="Science">
        <title>A widespread pathway for substitution of adenine by diaminopurine in phage genomes.</title>
        <authorList>
            <person name="Zhou Y."/>
            <person name="Xu X."/>
            <person name="Wei Y."/>
            <person name="Cheng Y."/>
            <person name="Guo Y."/>
            <person name="Khudyakov I."/>
            <person name="Liu F."/>
            <person name="He P."/>
            <person name="Song Z."/>
            <person name="Li Z."/>
            <person name="Gao Y."/>
            <person name="Ang E.L."/>
            <person name="Zhao H."/>
            <person name="Zhang Y."/>
            <person name="Zhao S."/>
        </authorList>
    </citation>
    <scope>FUNCTION (MICROBIAL INFECTION)</scope>
    <scope>CATALYTIC ACTIVITY (MICROBIAL INFECTION)</scope>
</reference>
<reference evidence="10 11 12" key="9">
    <citation type="journal article" date="2007" name="J. Mol. Biol.">
        <title>Substrate and product complexes of Escherichia coli adenylosuccinate lyase provide new insights into the enzymatic mechanism.</title>
        <authorList>
            <person name="Tsai M."/>
            <person name="Koo J."/>
            <person name="Yip P."/>
            <person name="Colman R.F."/>
            <person name="Segall M.L."/>
            <person name="Howell P.L."/>
        </authorList>
    </citation>
    <scope>X-RAY CRYSTALLOGRAPHY (1.85 ANGSTROMS) OF WILD-TYPE AND MUTANTS ALA-171 AND ASN-171 IN COMPLEX WITH AMP; FUMARATE AND N(6)-(1,2-DICARBOXYETHYL)-AMP</scope>
    <scope>FUNCTION</scope>
    <scope>CATALYTIC ACTIVITY</scope>
    <scope>ACTIVE SITE</scope>
    <scope>REACTION MECHANISM</scope>
    <scope>MUTAGENESIS OF HIS-171 AND SER-295</scope>
    <scope>SUBUNIT</scope>
</reference>
<comment type="function">
    <text evidence="2">Catalyzes two reactions in de novo purine nucleotide biosynthesis. Catalyzes the breakdown of 5-aminoimidazole- (N-succinylocarboxamide) ribotide (SAICAR or 2-[5-amino-1-(5-phospho-beta-D-ribosyl)imidazole-4-carboxamido]succinate) to 5-aminoimidazole-4-carboxamide ribotide (AICAR or 5-amino-1-(5-phospho-beta-D-ribosyl)imidazole-4-carboxamide) and fumarate, and of adenylosuccinate (ADS or N(6)-(1,2-dicarboxyethyl)-AMP) to adenosine monophosphate (AMP) and fumarate.</text>
</comment>
<comment type="function">
    <text evidence="4">(Microbial infection) Catalyzes the conversion of 2-amino-2'-deoxyadenylo-succinate to dZMP and fumarate, when the bacterium is infected by a phage that produces the substrate of this reaction, a step in the synthesis of dZTP (2-amino-2'-deoxyadenosine 5'-triphosphate), which is a nucleotide then used by the phage as a DNA polymerase substrate.</text>
</comment>
<comment type="catalytic activity">
    <reaction evidence="2">
        <text>N(6)-(1,2-dicarboxyethyl)-AMP = fumarate + AMP</text>
        <dbReference type="Rhea" id="RHEA:16853"/>
        <dbReference type="ChEBI" id="CHEBI:29806"/>
        <dbReference type="ChEBI" id="CHEBI:57567"/>
        <dbReference type="ChEBI" id="CHEBI:456215"/>
        <dbReference type="EC" id="4.3.2.2"/>
    </reaction>
    <physiologicalReaction direction="left-to-right" evidence="8">
        <dbReference type="Rhea" id="RHEA:16854"/>
    </physiologicalReaction>
</comment>
<comment type="catalytic activity">
    <reaction evidence="8">
        <text>(2S)-2-[5-amino-1-(5-phospho-beta-D-ribosyl)imidazole-4-carboxamido]succinate = 5-amino-1-(5-phospho-beta-D-ribosyl)imidazole-4-carboxamide + fumarate</text>
        <dbReference type="Rhea" id="RHEA:23920"/>
        <dbReference type="ChEBI" id="CHEBI:29806"/>
        <dbReference type="ChEBI" id="CHEBI:58443"/>
        <dbReference type="ChEBI" id="CHEBI:58475"/>
        <dbReference type="EC" id="4.3.2.2"/>
    </reaction>
    <physiologicalReaction direction="left-to-right" evidence="8">
        <dbReference type="Rhea" id="RHEA:23921"/>
    </physiologicalReaction>
</comment>
<comment type="catalytic activity">
    <reaction evidence="4">
        <text>(2S)-2-amino-2'-deoxyadenylo-succinate = dZMP + fumarate</text>
        <dbReference type="Rhea" id="RHEA:67636"/>
        <dbReference type="ChEBI" id="CHEBI:29806"/>
        <dbReference type="ChEBI" id="CHEBI:172924"/>
        <dbReference type="ChEBI" id="CHEBI:172927"/>
    </reaction>
    <physiologicalReaction direction="left-to-right" evidence="9">
        <dbReference type="Rhea" id="RHEA:67637"/>
    </physiologicalReaction>
</comment>
<comment type="pathway">
    <text evidence="8">Purine metabolism; AMP biosynthesis via de novo pathway; AMP from IMP: step 2/2.</text>
</comment>
<comment type="pathway">
    <text evidence="8">Purine metabolism; IMP biosynthesis via de novo pathway; 5-amino-1-(5-phospho-D-ribosyl)imidazole-4-carboxamide from 5-amino-1-(5-phospho-D-ribosyl)imidazole-4-carboxylate: step 2/2.</text>
</comment>
<comment type="pathway">
    <text evidence="4">Purine metabolism.</text>
</comment>
<comment type="subunit">
    <text evidence="2">Homotetramer. Residues from neighboring subunits contribute catalytic and substrate-binding residues to each active site.</text>
</comment>
<comment type="interaction">
    <interactant intactId="EBI-556534">
        <id>P0AB89</id>
    </interactant>
    <interactant intactId="EBI-542683">
        <id>P0AFG8</id>
        <label>aceE</label>
    </interactant>
    <organismsDiffer>false</organismsDiffer>
    <experiments>2</experiments>
</comment>
<comment type="induction">
    <text evidence="1">Its expression is under the control of the transcriptional repressor PurR.</text>
</comment>
<comment type="similarity">
    <text evidence="7">Belongs to the lyase 1 family. Adenylosuccinate lyase subfamily.</text>
</comment>
<dbReference type="EC" id="4.3.2.2" evidence="2"/>
<dbReference type="EMBL" id="M74924">
    <property type="protein sequence ID" value="AAA92731.1"/>
    <property type="molecule type" value="Genomic_DNA"/>
</dbReference>
<dbReference type="EMBL" id="X59307">
    <property type="protein sequence ID" value="CAA41996.1"/>
    <property type="molecule type" value="Genomic_DNA"/>
</dbReference>
<dbReference type="EMBL" id="U00096">
    <property type="protein sequence ID" value="AAC74215.1"/>
    <property type="molecule type" value="Genomic_DNA"/>
</dbReference>
<dbReference type="EMBL" id="AP009048">
    <property type="protein sequence ID" value="BAA35953.1"/>
    <property type="molecule type" value="Genomic_DNA"/>
</dbReference>
<dbReference type="PIR" id="S19212">
    <property type="entry name" value="S19212"/>
</dbReference>
<dbReference type="RefSeq" id="NP_415649.1">
    <property type="nucleotide sequence ID" value="NC_000913.3"/>
</dbReference>
<dbReference type="RefSeq" id="WP_000423742.1">
    <property type="nucleotide sequence ID" value="NZ_STEB01000016.1"/>
</dbReference>
<dbReference type="PDB" id="2PTQ">
    <property type="method" value="X-ray"/>
    <property type="resolution" value="2.00 A"/>
    <property type="chains" value="A/B=1-456"/>
</dbReference>
<dbReference type="PDB" id="2PTR">
    <property type="method" value="X-ray"/>
    <property type="resolution" value="1.85 A"/>
    <property type="chains" value="A/B=1-456"/>
</dbReference>
<dbReference type="PDB" id="2PTS">
    <property type="method" value="X-ray"/>
    <property type="resolution" value="2.00 A"/>
    <property type="chains" value="A=1-456"/>
</dbReference>
<dbReference type="PDBsum" id="2PTQ"/>
<dbReference type="PDBsum" id="2PTR"/>
<dbReference type="PDBsum" id="2PTS"/>
<dbReference type="SMR" id="P0AB89"/>
<dbReference type="BioGRID" id="4262847">
    <property type="interactions" value="286"/>
</dbReference>
<dbReference type="BioGRID" id="850067">
    <property type="interactions" value="8"/>
</dbReference>
<dbReference type="DIP" id="DIP-10608N"/>
<dbReference type="FunCoup" id="P0AB89">
    <property type="interactions" value="873"/>
</dbReference>
<dbReference type="IntAct" id="P0AB89">
    <property type="interactions" value="11"/>
</dbReference>
<dbReference type="STRING" id="511145.b1131"/>
<dbReference type="iPTMnet" id="P0AB89"/>
<dbReference type="jPOST" id="P0AB89"/>
<dbReference type="PaxDb" id="511145-b1131"/>
<dbReference type="EnsemblBacteria" id="AAC74215">
    <property type="protein sequence ID" value="AAC74215"/>
    <property type="gene ID" value="b1131"/>
</dbReference>
<dbReference type="GeneID" id="945695"/>
<dbReference type="KEGG" id="ecj:JW1117"/>
<dbReference type="KEGG" id="eco:b1131"/>
<dbReference type="KEGG" id="ecoc:C3026_06805"/>
<dbReference type="PATRIC" id="fig|1411691.4.peg.1135"/>
<dbReference type="EchoBASE" id="EB1290"/>
<dbReference type="eggNOG" id="COG0015">
    <property type="taxonomic scope" value="Bacteria"/>
</dbReference>
<dbReference type="HOGENOM" id="CLU_025566_2_0_6"/>
<dbReference type="InParanoid" id="P0AB89"/>
<dbReference type="OMA" id="NNWAVVA"/>
<dbReference type="OrthoDB" id="9768878at2"/>
<dbReference type="PhylomeDB" id="P0AB89"/>
<dbReference type="BioCyc" id="EcoCyc:ASL-MONOMER"/>
<dbReference type="BioCyc" id="MetaCyc:ASL-MONOMER"/>
<dbReference type="BRENDA" id="4.3.2.2">
    <property type="organism ID" value="2026"/>
</dbReference>
<dbReference type="UniPathway" id="UPA00074">
    <property type="reaction ID" value="UER00132"/>
</dbReference>
<dbReference type="UniPathway" id="UPA00075">
    <property type="reaction ID" value="UER00336"/>
</dbReference>
<dbReference type="EvolutionaryTrace" id="P0AB89"/>
<dbReference type="PRO" id="PR:P0AB89"/>
<dbReference type="Proteomes" id="UP000000625">
    <property type="component" value="Chromosome"/>
</dbReference>
<dbReference type="GO" id="GO:0005829">
    <property type="term" value="C:cytosol"/>
    <property type="evidence" value="ECO:0000314"/>
    <property type="project" value="EcoCyc"/>
</dbReference>
<dbReference type="GO" id="GO:0070626">
    <property type="term" value="F:(S)-2-(5-amino-1-(5-phospho-D-ribosyl)imidazole-4-carboxamido) succinate lyase (fumarate-forming) activity"/>
    <property type="evidence" value="ECO:0007669"/>
    <property type="project" value="RHEA"/>
</dbReference>
<dbReference type="GO" id="GO:0097216">
    <property type="term" value="F:guanosine tetraphosphate binding"/>
    <property type="evidence" value="ECO:0000314"/>
    <property type="project" value="EcoCyc"/>
</dbReference>
<dbReference type="GO" id="GO:0004018">
    <property type="term" value="F:N6-(1,2-dicarboxyethyl)AMP AMP-lyase (fumarate-forming) activity"/>
    <property type="evidence" value="ECO:0000314"/>
    <property type="project" value="EcoCyc"/>
</dbReference>
<dbReference type="GO" id="GO:0044208">
    <property type="term" value="P:'de novo' AMP biosynthetic process"/>
    <property type="evidence" value="ECO:0007669"/>
    <property type="project" value="UniProtKB-UniPathway"/>
</dbReference>
<dbReference type="GO" id="GO:0006189">
    <property type="term" value="P:'de novo' IMP biosynthetic process"/>
    <property type="evidence" value="ECO:0007669"/>
    <property type="project" value="UniProtKB-UniPathway"/>
</dbReference>
<dbReference type="GO" id="GO:0006974">
    <property type="term" value="P:DNA damage response"/>
    <property type="evidence" value="ECO:0000270"/>
    <property type="project" value="EcoliWiki"/>
</dbReference>
<dbReference type="CDD" id="cd01598">
    <property type="entry name" value="PurB"/>
    <property type="match status" value="1"/>
</dbReference>
<dbReference type="FunFam" id="1.10.275.10:FF:000003">
    <property type="entry name" value="Adenylosuccinate lyase"/>
    <property type="match status" value="1"/>
</dbReference>
<dbReference type="FunFam" id="1.10.40.30:FF:000004">
    <property type="entry name" value="Adenylosuccinate lyase"/>
    <property type="match status" value="1"/>
</dbReference>
<dbReference type="FunFam" id="1.20.200.10:FF:000004">
    <property type="entry name" value="Adenylosuccinate lyase"/>
    <property type="match status" value="1"/>
</dbReference>
<dbReference type="Gene3D" id="1.10.40.30">
    <property type="entry name" value="Fumarase/aspartase (C-terminal domain)"/>
    <property type="match status" value="1"/>
</dbReference>
<dbReference type="Gene3D" id="1.20.200.10">
    <property type="entry name" value="Fumarase/aspartase (Central domain)"/>
    <property type="match status" value="1"/>
</dbReference>
<dbReference type="Gene3D" id="1.10.275.10">
    <property type="entry name" value="Fumarase/aspartase (N-terminal domain)"/>
    <property type="match status" value="1"/>
</dbReference>
<dbReference type="InterPro" id="IPR024083">
    <property type="entry name" value="Fumarase/histidase_N"/>
</dbReference>
<dbReference type="InterPro" id="IPR020557">
    <property type="entry name" value="Fumarate_lyase_CS"/>
</dbReference>
<dbReference type="InterPro" id="IPR000362">
    <property type="entry name" value="Fumarate_lyase_fam"/>
</dbReference>
<dbReference type="InterPro" id="IPR022761">
    <property type="entry name" value="Fumarate_lyase_N"/>
</dbReference>
<dbReference type="InterPro" id="IPR008948">
    <property type="entry name" value="L-Aspartase-like"/>
</dbReference>
<dbReference type="InterPro" id="IPR004769">
    <property type="entry name" value="Pur_lyase"/>
</dbReference>
<dbReference type="InterPro" id="IPR047136">
    <property type="entry name" value="PurB_bact"/>
</dbReference>
<dbReference type="InterPro" id="IPR013539">
    <property type="entry name" value="PurB_C"/>
</dbReference>
<dbReference type="NCBIfam" id="NF006764">
    <property type="entry name" value="PRK09285.1"/>
    <property type="match status" value="1"/>
</dbReference>
<dbReference type="NCBIfam" id="TIGR00928">
    <property type="entry name" value="purB"/>
    <property type="match status" value="1"/>
</dbReference>
<dbReference type="PANTHER" id="PTHR43411">
    <property type="entry name" value="ADENYLOSUCCINATE LYASE"/>
    <property type="match status" value="1"/>
</dbReference>
<dbReference type="PANTHER" id="PTHR43411:SF1">
    <property type="entry name" value="ADENYLOSUCCINATE LYASE"/>
    <property type="match status" value="1"/>
</dbReference>
<dbReference type="Pfam" id="PF08328">
    <property type="entry name" value="ASL_C"/>
    <property type="match status" value="1"/>
</dbReference>
<dbReference type="Pfam" id="PF00206">
    <property type="entry name" value="Lyase_1"/>
    <property type="match status" value="1"/>
</dbReference>
<dbReference type="PRINTS" id="PR00149">
    <property type="entry name" value="FUMRATELYASE"/>
</dbReference>
<dbReference type="SUPFAM" id="SSF48557">
    <property type="entry name" value="L-aspartase-like"/>
    <property type="match status" value="1"/>
</dbReference>
<dbReference type="PROSITE" id="PS00163">
    <property type="entry name" value="FUMARATE_LYASES"/>
    <property type="match status" value="1"/>
</dbReference>
<feature type="chain" id="PRO_0000137878" description="Adenylosuccinate lyase">
    <location>
        <begin position="1"/>
        <end position="456"/>
    </location>
</feature>
<feature type="active site" description="Proton donor/acceptor" evidence="8">
    <location>
        <position position="171"/>
    </location>
</feature>
<feature type="active site" description="Proton donor/acceptor" evidence="8">
    <location>
        <position position="295"/>
    </location>
</feature>
<feature type="binding site" evidence="2 10">
    <location>
        <begin position="15"/>
        <end position="16"/>
    </location>
    <ligand>
        <name>AMP</name>
        <dbReference type="ChEBI" id="CHEBI:456215"/>
    </ligand>
</feature>
<feature type="binding site" evidence="2 11">
    <location>
        <begin position="15"/>
        <end position="16"/>
    </location>
    <ligand>
        <name>N(6)-(1,2-dicarboxyethyl)-AMP</name>
        <dbReference type="ChEBI" id="CHEBI:57567"/>
    </ligand>
</feature>
<feature type="binding site" evidence="2 10">
    <location>
        <begin position="90"/>
        <end position="92"/>
    </location>
    <ligand>
        <name>AMP</name>
        <dbReference type="ChEBI" id="CHEBI:456215"/>
    </ligand>
</feature>
<feature type="binding site" evidence="2 11">
    <location>
        <begin position="90"/>
        <end position="92"/>
    </location>
    <ligand>
        <name>N(6)-(1,2-dicarboxyethyl)-AMP</name>
        <dbReference type="ChEBI" id="CHEBI:57567"/>
    </ligand>
</feature>
<feature type="binding site" evidence="2 10">
    <location>
        <position position="91"/>
    </location>
    <ligand>
        <name>fumarate</name>
        <dbReference type="ChEBI" id="CHEBI:29806"/>
    </ligand>
</feature>
<feature type="binding site" evidence="2 10">
    <location>
        <begin position="122"/>
        <end position="123"/>
    </location>
    <ligand>
        <name>fumarate</name>
        <dbReference type="ChEBI" id="CHEBI:29806"/>
    </ligand>
</feature>
<feature type="binding site" evidence="2 11">
    <location>
        <begin position="122"/>
        <end position="123"/>
    </location>
    <ligand>
        <name>N(6)-(1,2-dicarboxyethyl)-AMP</name>
        <dbReference type="ChEBI" id="CHEBI:57567"/>
    </ligand>
</feature>
<feature type="binding site" evidence="2 10">
    <location>
        <position position="247"/>
    </location>
    <ligand>
        <name>AMP</name>
        <dbReference type="ChEBI" id="CHEBI:456215"/>
    </ligand>
</feature>
<feature type="binding site" evidence="2 10">
    <location>
        <position position="247"/>
    </location>
    <ligand>
        <name>fumarate</name>
        <dbReference type="ChEBI" id="CHEBI:29806"/>
    </ligand>
</feature>
<feature type="binding site" evidence="2 11">
    <location>
        <position position="247"/>
    </location>
    <ligand>
        <name>N(6)-(1,2-dicarboxyethyl)-AMP</name>
        <dbReference type="ChEBI" id="CHEBI:57567"/>
    </ligand>
</feature>
<feature type="binding site" evidence="2 10">
    <location>
        <position position="296"/>
    </location>
    <ligand>
        <name>fumarate</name>
        <dbReference type="ChEBI" id="CHEBI:29806"/>
    </ligand>
</feature>
<feature type="binding site" evidence="2 11">
    <location>
        <position position="296"/>
    </location>
    <ligand>
        <name>N(6)-(1,2-dicarboxyethyl)-AMP</name>
        <dbReference type="ChEBI" id="CHEBI:57567"/>
    </ligand>
</feature>
<feature type="binding site" evidence="2 10">
    <location>
        <begin position="301"/>
        <end position="303"/>
    </location>
    <ligand>
        <name>fumarate</name>
        <dbReference type="ChEBI" id="CHEBI:29806"/>
    </ligand>
</feature>
<feature type="binding site" evidence="2 11">
    <location>
        <begin position="301"/>
        <end position="303"/>
    </location>
    <ligand>
        <name>N(6)-(1,2-dicarboxyethyl)-AMP</name>
        <dbReference type="ChEBI" id="CHEBI:57567"/>
    </ligand>
</feature>
<feature type="binding site" evidence="2 10">
    <location>
        <position position="309"/>
    </location>
    <ligand>
        <name>AMP</name>
        <dbReference type="ChEBI" id="CHEBI:456215"/>
    </ligand>
</feature>
<feature type="binding site" evidence="2 11">
    <location>
        <position position="309"/>
    </location>
    <ligand>
        <name>N(6)-(1,2-dicarboxyethyl)-AMP</name>
        <dbReference type="ChEBI" id="CHEBI:57567"/>
    </ligand>
</feature>
<feature type="binding site" evidence="2 10">
    <location>
        <position position="335"/>
    </location>
    <ligand>
        <name>AMP</name>
        <dbReference type="ChEBI" id="CHEBI:456215"/>
    </ligand>
</feature>
<feature type="binding site" evidence="2 11">
    <location>
        <position position="335"/>
    </location>
    <ligand>
        <name>N(6)-(1,2-dicarboxyethyl)-AMP</name>
        <dbReference type="ChEBI" id="CHEBI:57567"/>
    </ligand>
</feature>
<feature type="binding site" evidence="2 10">
    <location>
        <begin position="340"/>
        <end position="344"/>
    </location>
    <ligand>
        <name>AMP</name>
        <dbReference type="ChEBI" id="CHEBI:456215"/>
    </ligand>
</feature>
<feature type="binding site" evidence="2 11">
    <location>
        <begin position="340"/>
        <end position="344"/>
    </location>
    <ligand>
        <name>N(6)-(1,2-dicarboxyethyl)-AMP</name>
        <dbReference type="ChEBI" id="CHEBI:57567"/>
    </ligand>
</feature>
<feature type="modified residue" description="N6-acetyllysine" evidence="3">
    <location>
        <position position="94"/>
    </location>
</feature>
<feature type="modified residue" description="N6-acetyllysine" evidence="3">
    <location>
        <position position="366"/>
    </location>
</feature>
<feature type="mutagenesis site" description="Reduces catalytic activity about 500-fold." evidence="2">
    <original>H</original>
    <variation>A</variation>
    <variation>N</variation>
    <location>
        <position position="171"/>
    </location>
</feature>
<feature type="mutagenesis site" description="Reduces catalytic activity about 1000-fold." evidence="2">
    <original>S</original>
    <variation>A</variation>
    <location>
        <position position="295"/>
    </location>
</feature>
<feature type="sequence conflict" description="In Ref. 1; AAA92731." evidence="7" ref="1">
    <original>P</original>
    <variation>A</variation>
    <location>
        <position position="145"/>
    </location>
</feature>
<feature type="sequence conflict" description="In Ref. 1; AAA92731." evidence="7" ref="1">
    <original>I</original>
    <variation>L</variation>
    <location>
        <position position="154"/>
    </location>
</feature>
<feature type="turn" evidence="13">
    <location>
        <begin position="5"/>
        <end position="7"/>
    </location>
</feature>
<feature type="turn" evidence="13">
    <location>
        <begin position="11"/>
        <end position="16"/>
    </location>
</feature>
<feature type="helix" evidence="13">
    <location>
        <begin position="17"/>
        <end position="19"/>
    </location>
</feature>
<feature type="helix" evidence="13">
    <location>
        <begin position="21"/>
        <end position="25"/>
    </location>
</feature>
<feature type="helix" evidence="13">
    <location>
        <begin position="29"/>
        <end position="49"/>
    </location>
</feature>
<feature type="helix" evidence="13">
    <location>
        <begin position="61"/>
        <end position="72"/>
    </location>
</feature>
<feature type="helix" evidence="13">
    <location>
        <begin position="76"/>
        <end position="89"/>
    </location>
</feature>
<feature type="helix" evidence="13">
    <location>
        <begin position="92"/>
        <end position="104"/>
    </location>
</feature>
<feature type="helix" evidence="13">
    <location>
        <begin position="108"/>
        <end position="111"/>
    </location>
</feature>
<feature type="helix" evidence="13">
    <location>
        <begin position="112"/>
        <end position="116"/>
    </location>
</feature>
<feature type="turn" evidence="13">
    <location>
        <begin position="117"/>
        <end position="120"/>
    </location>
</feature>
<feature type="helix" evidence="13">
    <location>
        <begin position="123"/>
        <end position="141"/>
    </location>
</feature>
<feature type="helix" evidence="13">
    <location>
        <begin position="143"/>
        <end position="160"/>
    </location>
</feature>
<feature type="turn" evidence="13">
    <location>
        <begin position="161"/>
        <end position="163"/>
    </location>
</feature>
<feature type="strand" evidence="13">
    <location>
        <begin position="165"/>
        <end position="170"/>
    </location>
</feature>
<feature type="strand" evidence="13">
    <location>
        <begin position="173"/>
        <end position="179"/>
    </location>
</feature>
<feature type="helix" evidence="13">
    <location>
        <begin position="180"/>
        <end position="200"/>
    </location>
</feature>
<feature type="helix" evidence="13">
    <location>
        <begin position="215"/>
        <end position="220"/>
    </location>
</feature>
<feature type="helix" evidence="13">
    <location>
        <begin position="226"/>
        <end position="236"/>
    </location>
</feature>
<feature type="strand" evidence="13">
    <location>
        <begin position="246"/>
        <end position="248"/>
    </location>
</feature>
<feature type="helix" evidence="13">
    <location>
        <begin position="252"/>
        <end position="280"/>
    </location>
</feature>
<feature type="strand" evidence="13">
    <location>
        <begin position="283"/>
        <end position="286"/>
    </location>
</feature>
<feature type="helix" evidence="13">
    <location>
        <begin position="305"/>
        <end position="327"/>
    </location>
</feature>
<feature type="helix" evidence="13">
    <location>
        <begin position="338"/>
        <end position="342"/>
    </location>
</feature>
<feature type="helix" evidence="13">
    <location>
        <begin position="343"/>
        <end position="345"/>
    </location>
</feature>
<feature type="helix" evidence="13">
    <location>
        <begin position="346"/>
        <end position="366"/>
    </location>
</feature>
<feature type="strand" evidence="13">
    <location>
        <begin position="367"/>
        <end position="369"/>
    </location>
</feature>
<feature type="helix" evidence="13">
    <location>
        <begin position="371"/>
        <end position="378"/>
    </location>
</feature>
<feature type="helix" evidence="13">
    <location>
        <begin position="382"/>
        <end position="385"/>
    </location>
</feature>
<feature type="helix" evidence="13">
    <location>
        <begin position="386"/>
        <end position="395"/>
    </location>
</feature>
<feature type="helix" evidence="13">
    <location>
        <begin position="401"/>
        <end position="407"/>
    </location>
</feature>
<feature type="helix" evidence="13">
    <location>
        <begin position="416"/>
        <end position="424"/>
    </location>
</feature>
<feature type="strand" evidence="13">
    <location>
        <begin position="426"/>
        <end position="428"/>
    </location>
</feature>
<feature type="helix" evidence="13">
    <location>
        <begin position="430"/>
        <end position="437"/>
    </location>
</feature>
<feature type="helix" evidence="13">
    <location>
        <begin position="441"/>
        <end position="443"/>
    </location>
</feature>
<feature type="helix" evidence="13">
    <location>
        <begin position="448"/>
        <end position="454"/>
    </location>
</feature>
<evidence type="ECO:0000269" key="1">
    <source>
    </source>
</evidence>
<evidence type="ECO:0000269" key="2">
    <source>
    </source>
</evidence>
<evidence type="ECO:0000269" key="3">
    <source>
    </source>
</evidence>
<evidence type="ECO:0000269" key="4">
    <source>
    </source>
</evidence>
<evidence type="ECO:0000303" key="5">
    <source>
    </source>
</evidence>
<evidence type="ECO:0000303" key="6">
    <source>
    </source>
</evidence>
<evidence type="ECO:0000305" key="7"/>
<evidence type="ECO:0000305" key="8">
    <source>
    </source>
</evidence>
<evidence type="ECO:0000305" key="9">
    <source>
    </source>
</evidence>
<evidence type="ECO:0007744" key="10">
    <source>
        <dbReference type="PDB" id="2PTQ"/>
    </source>
</evidence>
<evidence type="ECO:0007744" key="11">
    <source>
        <dbReference type="PDB" id="2PTR"/>
    </source>
</evidence>
<evidence type="ECO:0007744" key="12">
    <source>
        <dbReference type="PDB" id="2PTS"/>
    </source>
</evidence>
<evidence type="ECO:0007829" key="13">
    <source>
        <dbReference type="PDB" id="2PTR"/>
    </source>
</evidence>
<proteinExistence type="evidence at protein level"/>
<organism>
    <name type="scientific">Escherichia coli (strain K12)</name>
    <dbReference type="NCBI Taxonomy" id="83333"/>
    <lineage>
        <taxon>Bacteria</taxon>
        <taxon>Pseudomonadati</taxon>
        <taxon>Pseudomonadota</taxon>
        <taxon>Gammaproteobacteria</taxon>
        <taxon>Enterobacterales</taxon>
        <taxon>Enterobacteriaceae</taxon>
        <taxon>Escherichia</taxon>
    </lineage>
</organism>
<sequence length="456" mass="51543">MELSSLTAVSPVDGRYGDKVSALRGIFSEYGLLKFRVQVEVRWLQKLAAHAAIKEVPAFAADAIGYLDAIVASFSEEDAARIKTIERTTNHDVKAVEYFLKEKVAEIPELHAVSEFIHFACTSEDINNLSHALMLKTARDEVILPYWRQLIDGIKDLAVQYRDIPLLSRTHGQPATPSTIGKEMANVAYRMERQYRQLNQVEILGKINGAVGNYNAHIAAYPEVDWHQFSEEFVTSLGIQWNPYTTQIEPHDYIAELFDCVARFNTILIDFDRDVWGYIALNHFKQKTIAGEIGSSTMPHKVNPIDFENSEGNLGLSNAVLQHLASKLPVSRWQRDLTDSTVLRNLGVGIGYALIAYQSTLKGVSKLEVNRDHLLDELDHNWEVLAEPIQTVMRRYGIEKPYEKLKELTRGKRVDAEGMKQFIDGLALPEEEKARLKAMTPANYIGRAITMVDELK</sequence>
<name>PUR8_ECOLI</name>
<gene>
    <name type="primary">purB</name>
    <name type="ordered locus">b1131</name>
    <name type="ordered locus">JW1117</name>
</gene>